<accession>Q9XF37</accession>
<reference key="1">
    <citation type="journal article" date="2000" name="Clin. Exp. Allergy">
        <title>Cloning of the minor allergen Api g 4 profilin from celery (Apium graveolens) and its cross-reactivity with birch pollen profilin Bet v 2.</title>
        <authorList>
            <person name="Scheurer S."/>
            <person name="Wangorsch A."/>
            <person name="Haustein D."/>
            <person name="Vieths S."/>
        </authorList>
    </citation>
    <scope>NUCLEOTIDE SEQUENCE [MRNA]</scope>
    <scope>ALLERGEN</scope>
    <source>
        <strain>cv. Prinz</strain>
    </source>
</reference>
<name>PROF_APIGR</name>
<proteinExistence type="evidence at protein level"/>
<keyword id="KW-0009">Actin-binding</keyword>
<keyword id="KW-0020">Allergen</keyword>
<keyword id="KW-0963">Cytoplasm</keyword>
<keyword id="KW-0206">Cytoskeleton</keyword>
<organism>
    <name type="scientific">Apium graveolens</name>
    <name type="common">Celery</name>
    <dbReference type="NCBI Taxonomy" id="4045"/>
    <lineage>
        <taxon>Eukaryota</taxon>
        <taxon>Viridiplantae</taxon>
        <taxon>Streptophyta</taxon>
        <taxon>Embryophyta</taxon>
        <taxon>Tracheophyta</taxon>
        <taxon>Spermatophyta</taxon>
        <taxon>Magnoliopsida</taxon>
        <taxon>eudicotyledons</taxon>
        <taxon>Gunneridae</taxon>
        <taxon>Pentapetalae</taxon>
        <taxon>asterids</taxon>
        <taxon>campanulids</taxon>
        <taxon>Apiales</taxon>
        <taxon>Apiaceae</taxon>
        <taxon>Apioideae</taxon>
        <taxon>apioid superclade</taxon>
        <taxon>Apieae</taxon>
        <taxon>Apium</taxon>
    </lineage>
</organism>
<evidence type="ECO:0000250" key="1"/>
<evidence type="ECO:0000269" key="2">
    <source>
    </source>
</evidence>
<evidence type="ECO:0000305" key="3"/>
<feature type="initiator methionine" description="Removed" evidence="1">
    <location>
        <position position="1"/>
    </location>
</feature>
<feature type="chain" id="PRO_0000199613" description="Profilin">
    <location>
        <begin position="2"/>
        <end position="134"/>
    </location>
</feature>
<comment type="function">
    <text evidence="1">Binds to actin and affects the structure of the cytoskeleton. At high concentrations, profilin prevents the polymerization of actin, whereas it enhances it at low concentrations. By binding to PIP2, it inhibits the formation of IP3 and DG (By similarity).</text>
</comment>
<comment type="subunit">
    <text>Occurs in many kinds of cells as a complex with monomeric actin in a 1:1 ratio.</text>
</comment>
<comment type="subcellular location">
    <subcellularLocation>
        <location evidence="1">Cytoplasm</location>
        <location evidence="1">Cytoskeleton</location>
    </subcellularLocation>
</comment>
<comment type="allergen">
    <text evidence="2">Causes an allergic reaction in human.</text>
</comment>
<comment type="similarity">
    <text evidence="3">Belongs to the profilin family.</text>
</comment>
<dbReference type="EMBL" id="AF129423">
    <property type="protein sequence ID" value="AAD29409.1"/>
    <property type="molecule type" value="mRNA"/>
</dbReference>
<dbReference type="SMR" id="Q9XF37"/>
<dbReference type="Allergome" id="43">
    <property type="allergen name" value="Api g 4"/>
</dbReference>
<dbReference type="Allergome" id="5996">
    <property type="allergen name" value="Api g 4.0101"/>
</dbReference>
<dbReference type="GO" id="GO:0005938">
    <property type="term" value="C:cell cortex"/>
    <property type="evidence" value="ECO:0007669"/>
    <property type="project" value="TreeGrafter"/>
</dbReference>
<dbReference type="GO" id="GO:0005856">
    <property type="term" value="C:cytoskeleton"/>
    <property type="evidence" value="ECO:0007669"/>
    <property type="project" value="UniProtKB-SubCell"/>
</dbReference>
<dbReference type="GO" id="GO:0003785">
    <property type="term" value="F:actin monomer binding"/>
    <property type="evidence" value="ECO:0007669"/>
    <property type="project" value="TreeGrafter"/>
</dbReference>
<dbReference type="CDD" id="cd00148">
    <property type="entry name" value="PROF"/>
    <property type="match status" value="1"/>
</dbReference>
<dbReference type="FunFam" id="3.30.450.30:FF:000001">
    <property type="entry name" value="Profilin"/>
    <property type="match status" value="1"/>
</dbReference>
<dbReference type="Gene3D" id="3.30.450.30">
    <property type="entry name" value="Dynein light chain 2a, cytoplasmic"/>
    <property type="match status" value="1"/>
</dbReference>
<dbReference type="InterPro" id="IPR048278">
    <property type="entry name" value="PFN"/>
</dbReference>
<dbReference type="InterPro" id="IPR005455">
    <property type="entry name" value="PFN_euk"/>
</dbReference>
<dbReference type="InterPro" id="IPR036140">
    <property type="entry name" value="PFN_sf"/>
</dbReference>
<dbReference type="InterPro" id="IPR027310">
    <property type="entry name" value="Profilin_CS"/>
</dbReference>
<dbReference type="PANTHER" id="PTHR11604">
    <property type="entry name" value="PROFILIN"/>
    <property type="match status" value="1"/>
</dbReference>
<dbReference type="PANTHER" id="PTHR11604:SF35">
    <property type="entry name" value="PROFILIN-3"/>
    <property type="match status" value="1"/>
</dbReference>
<dbReference type="Pfam" id="PF00235">
    <property type="entry name" value="Profilin"/>
    <property type="match status" value="1"/>
</dbReference>
<dbReference type="PRINTS" id="PR00392">
    <property type="entry name" value="PROFILIN"/>
</dbReference>
<dbReference type="PRINTS" id="PR01640">
    <property type="entry name" value="PROFILINPLNT"/>
</dbReference>
<dbReference type="SMART" id="SM00392">
    <property type="entry name" value="PROF"/>
    <property type="match status" value="1"/>
</dbReference>
<dbReference type="SUPFAM" id="SSF55770">
    <property type="entry name" value="Profilin (actin-binding protein)"/>
    <property type="match status" value="1"/>
</dbReference>
<dbReference type="PROSITE" id="PS00414">
    <property type="entry name" value="PROFILIN"/>
    <property type="match status" value="1"/>
</dbReference>
<sequence length="134" mass="14276">MSWQAYVDDHLMCEVEGNPGQTLTAAAIIGHDGSVWAQSSTFPQIKPEEIAGIMKDFDEPGHLAPTGLYLGGAKYMVIQGEPNAVIRGKKGSGGVTIKKTGQALVFGVYDEPVTPGQCNVIVERLGDYLIDQGL</sequence>
<protein>
    <recommendedName>
        <fullName>Profilin</fullName>
    </recommendedName>
    <alternativeName>
        <fullName>Minor pollen allergen Api g 4</fullName>
    </alternativeName>
    <allergenName>Api g 4</allergenName>
</protein>